<protein>
    <recommendedName>
        <fullName evidence="1">Photosystem II reaction center protein J</fullName>
        <shortName evidence="1">PSII-J</shortName>
    </recommendedName>
</protein>
<evidence type="ECO:0000255" key="1">
    <source>
        <dbReference type="HAMAP-Rule" id="MF_01305"/>
    </source>
</evidence>
<proteinExistence type="inferred from homology"/>
<reference key="1">
    <citation type="journal article" date="2006" name="BMC Biol.">
        <title>The complete chloroplast DNA sequence of the green alga Oltmannsiellopsis viridis reveals a distinctive quadripartite architecture in the chloroplast genome of early diverging ulvophytes.</title>
        <authorList>
            <person name="Pombert J.-F."/>
            <person name="Lemieux C."/>
            <person name="Turmel M."/>
        </authorList>
    </citation>
    <scope>NUCLEOTIDE SEQUENCE [LARGE SCALE GENOMIC DNA]</scope>
</reference>
<accession>Q20EW5</accession>
<gene>
    <name evidence="1" type="primary">psbJ</name>
</gene>
<sequence>MTNTGTTGRIPLWLVGTVVGTLALGLVALFFYGAYHGLGSSL</sequence>
<geneLocation type="chloroplast"/>
<keyword id="KW-0150">Chloroplast</keyword>
<keyword id="KW-0472">Membrane</keyword>
<keyword id="KW-0602">Photosynthesis</keyword>
<keyword id="KW-0604">Photosystem II</keyword>
<keyword id="KW-0934">Plastid</keyword>
<keyword id="KW-0674">Reaction center</keyword>
<keyword id="KW-0793">Thylakoid</keyword>
<keyword id="KW-0812">Transmembrane</keyword>
<keyword id="KW-1133">Transmembrane helix</keyword>
<comment type="function">
    <text evidence="1">One of the components of the core complex of photosystem II (PSII). PSII is a light-driven water:plastoquinone oxidoreductase that uses light energy to abstract electrons from H(2)O, generating O(2) and a proton gradient subsequently used for ATP formation. It consists of a core antenna complex that captures photons, and an electron transfer chain that converts photonic excitation into a charge separation.</text>
</comment>
<comment type="subunit">
    <text evidence="1">PSII is composed of 1 copy each of membrane proteins PsbA, PsbB, PsbC, PsbD, PsbE, PsbF, PsbH, PsbI, PsbJ, PsbK, PsbL, PsbM, PsbT, PsbX, PsbY, PsbZ, Psb30/Ycf12, at least 3 peripheral proteins of the oxygen-evolving complex and a large number of cofactors. It forms dimeric complexes.</text>
</comment>
<comment type="subcellular location">
    <subcellularLocation>
        <location evidence="1">Plastid</location>
        <location evidence="1">Chloroplast thylakoid membrane</location>
        <topology evidence="1">Single-pass membrane protein</topology>
    </subcellularLocation>
</comment>
<comment type="similarity">
    <text evidence="1">Belongs to the PsbJ family.</text>
</comment>
<dbReference type="EMBL" id="DQ291132">
    <property type="protein sequence ID" value="ABB81948.1"/>
    <property type="molecule type" value="Genomic_DNA"/>
</dbReference>
<dbReference type="RefSeq" id="YP_635880.1">
    <property type="nucleotide sequence ID" value="NC_008099.1"/>
</dbReference>
<dbReference type="SMR" id="Q20EW5"/>
<dbReference type="GeneID" id="4100127"/>
<dbReference type="GO" id="GO:0009535">
    <property type="term" value="C:chloroplast thylakoid membrane"/>
    <property type="evidence" value="ECO:0007669"/>
    <property type="project" value="UniProtKB-SubCell"/>
</dbReference>
<dbReference type="GO" id="GO:0009539">
    <property type="term" value="C:photosystem II reaction center"/>
    <property type="evidence" value="ECO:0007669"/>
    <property type="project" value="InterPro"/>
</dbReference>
<dbReference type="GO" id="GO:0015979">
    <property type="term" value="P:photosynthesis"/>
    <property type="evidence" value="ECO:0007669"/>
    <property type="project" value="UniProtKB-UniRule"/>
</dbReference>
<dbReference type="Gene3D" id="6.10.250.2070">
    <property type="match status" value="1"/>
</dbReference>
<dbReference type="HAMAP" id="MF_01305">
    <property type="entry name" value="PSII_PsbJ"/>
    <property type="match status" value="1"/>
</dbReference>
<dbReference type="InterPro" id="IPR002682">
    <property type="entry name" value="PSII_PsbJ"/>
</dbReference>
<dbReference type="InterPro" id="IPR037267">
    <property type="entry name" value="PSII_PsbJ_sf"/>
</dbReference>
<dbReference type="PANTHER" id="PTHR34812">
    <property type="entry name" value="PHOTOSYSTEM II REACTION CENTER PROTEIN J"/>
    <property type="match status" value="1"/>
</dbReference>
<dbReference type="PANTHER" id="PTHR34812:SF3">
    <property type="entry name" value="PHOTOSYSTEM II REACTION CENTER PROTEIN J"/>
    <property type="match status" value="1"/>
</dbReference>
<dbReference type="Pfam" id="PF01788">
    <property type="entry name" value="PsbJ"/>
    <property type="match status" value="1"/>
</dbReference>
<dbReference type="SUPFAM" id="SSF161021">
    <property type="entry name" value="Photosystem II reaction center protein J, PsbJ"/>
    <property type="match status" value="1"/>
</dbReference>
<name>PSBJ_OLTVI</name>
<organism>
    <name type="scientific">Oltmannsiellopsis viridis</name>
    <name type="common">Marine flagellate</name>
    <name type="synonym">Oltmannsiella viridis</name>
    <dbReference type="NCBI Taxonomy" id="51324"/>
    <lineage>
        <taxon>Eukaryota</taxon>
        <taxon>Viridiplantae</taxon>
        <taxon>Chlorophyta</taxon>
        <taxon>Ulvophyceae</taxon>
        <taxon>Oltmannsiellopsidales</taxon>
        <taxon>Oltmannsiellopsidaceae</taxon>
        <taxon>Oltmannsiellopsis</taxon>
    </lineage>
</organism>
<feature type="chain" id="PRO_0000276105" description="Photosystem II reaction center protein J">
    <location>
        <begin position="1"/>
        <end position="42"/>
    </location>
</feature>
<feature type="transmembrane region" description="Helical" evidence="1">
    <location>
        <begin position="10"/>
        <end position="30"/>
    </location>
</feature>